<comment type="function">
    <text evidence="1">One of the components of the core complex of photosystem II (PSII), required for its stability and/or assembly. PSII is a light-driven water:plastoquinone oxidoreductase that uses light energy to abstract electrons from H(2)O, generating O(2) and a proton gradient subsequently used for ATP formation. It consists of a core antenna complex that captures photons, and an electron transfer chain that converts photonic excitation into a charge separation.</text>
</comment>
<comment type="subunit">
    <text evidence="1">PSII is composed of 1 copy each of membrane proteins PsbA, PsbB, PsbC, PsbD, PsbE, PsbF, PsbH, PsbI, PsbJ, PsbK, PsbL, PsbM, PsbT, PsbX, PsbY, PsbZ, Psb30/Ycf12, at least 3 peripheral proteins of the oxygen-evolving complex and a large number of cofactors. It forms dimeric complexes.</text>
</comment>
<comment type="subcellular location">
    <subcellularLocation>
        <location evidence="2">Plastid membrane</location>
        <topology evidence="1">Single-pass membrane protein</topology>
    </subcellularLocation>
</comment>
<comment type="similarity">
    <text evidence="1">Belongs to the PsbI family.</text>
</comment>
<comment type="caution">
    <text evidence="2">Young tissue from this organism is photosynthetic and contains some thylakoids, although the photosynthetic activity does not exceed the light compensation point.</text>
</comment>
<keyword id="KW-0472">Membrane</keyword>
<keyword id="KW-0602">Photosynthesis</keyword>
<keyword id="KW-0604">Photosystem II</keyword>
<keyword id="KW-0934">Plastid</keyword>
<keyword id="KW-0674">Reaction center</keyword>
<keyword id="KW-0812">Transmembrane</keyword>
<keyword id="KW-1133">Transmembrane helix</keyword>
<geneLocation type="plastid"/>
<name>PSBI_CUSRE</name>
<gene>
    <name evidence="1" type="primary">psbI</name>
</gene>
<feature type="chain" id="PRO_0000353227" description="Photosystem II reaction center protein I">
    <location>
        <begin position="1"/>
        <end position="36"/>
    </location>
</feature>
<feature type="transmembrane region" description="Helical" evidence="1">
    <location>
        <begin position="4"/>
        <end position="24"/>
    </location>
</feature>
<dbReference type="EMBL" id="AM711640">
    <property type="protein sequence ID" value="CAM98378.1"/>
    <property type="molecule type" value="Genomic_DNA"/>
</dbReference>
<dbReference type="RefSeq" id="YP_001430092.1">
    <property type="nucleotide sequence ID" value="NC_009766.1"/>
</dbReference>
<dbReference type="SMR" id="A7M950"/>
<dbReference type="GeneID" id="5536661"/>
<dbReference type="GO" id="GO:0009539">
    <property type="term" value="C:photosystem II reaction center"/>
    <property type="evidence" value="ECO:0007669"/>
    <property type="project" value="InterPro"/>
</dbReference>
<dbReference type="GO" id="GO:0042170">
    <property type="term" value="C:plastid membrane"/>
    <property type="evidence" value="ECO:0007669"/>
    <property type="project" value="UniProtKB-SubCell"/>
</dbReference>
<dbReference type="GO" id="GO:0042651">
    <property type="term" value="C:thylakoid membrane"/>
    <property type="evidence" value="ECO:0007669"/>
    <property type="project" value="UniProtKB-UniRule"/>
</dbReference>
<dbReference type="GO" id="GO:0015979">
    <property type="term" value="P:photosynthesis"/>
    <property type="evidence" value="ECO:0007669"/>
    <property type="project" value="UniProtKB-UniRule"/>
</dbReference>
<dbReference type="HAMAP" id="MF_01316">
    <property type="entry name" value="PSII_PsbI"/>
    <property type="match status" value="1"/>
</dbReference>
<dbReference type="InterPro" id="IPR003686">
    <property type="entry name" value="PSII_PsbI"/>
</dbReference>
<dbReference type="InterPro" id="IPR037271">
    <property type="entry name" value="PSII_PsbI_sf"/>
</dbReference>
<dbReference type="PANTHER" id="PTHR35772">
    <property type="entry name" value="PHOTOSYSTEM II REACTION CENTER PROTEIN I"/>
    <property type="match status" value="1"/>
</dbReference>
<dbReference type="PANTHER" id="PTHR35772:SF1">
    <property type="entry name" value="PHOTOSYSTEM II REACTION CENTER PROTEIN I"/>
    <property type="match status" value="1"/>
</dbReference>
<dbReference type="Pfam" id="PF02532">
    <property type="entry name" value="PsbI"/>
    <property type="match status" value="1"/>
</dbReference>
<dbReference type="SUPFAM" id="SSF161041">
    <property type="entry name" value="Photosystem II reaction center protein I, PsbI"/>
    <property type="match status" value="1"/>
</dbReference>
<organism>
    <name type="scientific">Cuscuta reflexa</name>
    <name type="common">Southern Asian dodder</name>
    <dbReference type="NCBI Taxonomy" id="4129"/>
    <lineage>
        <taxon>Eukaryota</taxon>
        <taxon>Viridiplantae</taxon>
        <taxon>Streptophyta</taxon>
        <taxon>Embryophyta</taxon>
        <taxon>Tracheophyta</taxon>
        <taxon>Spermatophyta</taxon>
        <taxon>Magnoliopsida</taxon>
        <taxon>eudicotyledons</taxon>
        <taxon>Gunneridae</taxon>
        <taxon>Pentapetalae</taxon>
        <taxon>asterids</taxon>
        <taxon>lamiids</taxon>
        <taxon>Solanales</taxon>
        <taxon>Convolvulaceae</taxon>
        <taxon>Cuscuteae</taxon>
        <taxon>Cuscuta</taxon>
        <taxon>Cuscuta subgen. Monogynella</taxon>
    </lineage>
</organism>
<accession>A7M950</accession>
<sequence length="36" mass="4301">MFTLKLFVYTVVIFFVSLFIFGFLSNDPRRNPGREE</sequence>
<proteinExistence type="inferred from homology"/>
<reference key="1">
    <citation type="journal article" date="2007" name="BMC Plant Biol.">
        <title>Complete DNA sequences of the plastid genomes of two parasitic flowering plant species, Cuscuta reflexa and Cuscuta gronovii.</title>
        <authorList>
            <person name="Funk H.T."/>
            <person name="Berg S."/>
            <person name="Krupinska K."/>
            <person name="Maier U.-G."/>
            <person name="Krause K."/>
        </authorList>
    </citation>
    <scope>NUCLEOTIDE SEQUENCE [LARGE SCALE GENOMIC DNA]</scope>
</reference>
<evidence type="ECO:0000255" key="1">
    <source>
        <dbReference type="HAMAP-Rule" id="MF_01316"/>
    </source>
</evidence>
<evidence type="ECO:0000305" key="2"/>
<protein>
    <recommendedName>
        <fullName evidence="1">Photosystem II reaction center protein I</fullName>
        <shortName evidence="1">PSII-I</shortName>
    </recommendedName>
    <alternativeName>
        <fullName evidence="1">PSII 4.8 kDa protein</fullName>
    </alternativeName>
</protein>